<gene>
    <name evidence="1" type="primary">metG</name>
    <name type="ordered locus">Shew185_2458</name>
</gene>
<proteinExistence type="inferred from homology"/>
<sequence length="689" mass="77341">MATSQRKILVTSALPYANGPIHLGHMLEYIQTDIWSRYQKLRGHECHYICADDAHGTPIMLKAQQLGIAPEDMIAQVNKEHQQDFADFNVAFDNYHSTHSEENRLMASDIYLKLRDNGYIKSKSISQLFDPEKSMFLPDRFVKGTCPKCKSPDQYGDNCDSCGATYSPTELINPKSAVSGATPVMKDTEHFFFDLPAFEGMLKEWTRSGALQVEMANKLDEWFEQGLQQWDITRDAPYFGFEIPDAPGKYFYVWLDAPIGYMGSFKNLCAKRPELSFDEFWGKDSTAEVYHFIGKDIVYFHSLFWPAMLHGSGYRQPNSVYAHGYVTVNGAKMSKSKGTFIKARTYLDHLDPEYLRYYYAAKLSSRIDDLDLNLEDFAQRVNSDLVGKLVNLASRTAGFITKRFNGKLAKINDTTLTEAFLAKQDVIADFYESREYGKAMREIMALADIANGFVADAAPWQMVKHDDQQEAAHQVCSNALNLFRILVTYLKPVLPRLAQDVEAFFQLPLTWDALSQDLAGHEIAPFKAMMQRVELDKVNAMVADSKDNLQVTADAPKTAAPEKTAEASSVSSEPLVDDPISETINFDDFAKIDLRIARIIKAEHVADADKLLKLQLDIGGETRQVFAGIKSAYSPEDLEGKLTVMVANLAPRKMRFGMSEGMVLAAGPGGSDLWILEPHEGAQPGMRVK</sequence>
<evidence type="ECO:0000255" key="1">
    <source>
        <dbReference type="HAMAP-Rule" id="MF_00098"/>
    </source>
</evidence>
<evidence type="ECO:0000256" key="2">
    <source>
        <dbReference type="SAM" id="MobiDB-lite"/>
    </source>
</evidence>
<name>SYM_SHEB8</name>
<feature type="chain" id="PRO_0000331904" description="Methionine--tRNA ligase">
    <location>
        <begin position="1"/>
        <end position="689"/>
    </location>
</feature>
<feature type="domain" description="tRNA-binding" evidence="1">
    <location>
        <begin position="588"/>
        <end position="689"/>
    </location>
</feature>
<feature type="region of interest" description="Disordered" evidence="2">
    <location>
        <begin position="554"/>
        <end position="574"/>
    </location>
</feature>
<feature type="short sequence motif" description="'HIGH' region">
    <location>
        <begin position="15"/>
        <end position="25"/>
    </location>
</feature>
<feature type="short sequence motif" description="'KMSKS' region">
    <location>
        <begin position="332"/>
        <end position="336"/>
    </location>
</feature>
<feature type="binding site" evidence="1">
    <location>
        <position position="146"/>
    </location>
    <ligand>
        <name>Zn(2+)</name>
        <dbReference type="ChEBI" id="CHEBI:29105"/>
    </ligand>
</feature>
<feature type="binding site" evidence="1">
    <location>
        <position position="149"/>
    </location>
    <ligand>
        <name>Zn(2+)</name>
        <dbReference type="ChEBI" id="CHEBI:29105"/>
    </ligand>
</feature>
<feature type="binding site" evidence="1">
    <location>
        <position position="159"/>
    </location>
    <ligand>
        <name>Zn(2+)</name>
        <dbReference type="ChEBI" id="CHEBI:29105"/>
    </ligand>
</feature>
<feature type="binding site" evidence="1">
    <location>
        <position position="162"/>
    </location>
    <ligand>
        <name>Zn(2+)</name>
        <dbReference type="ChEBI" id="CHEBI:29105"/>
    </ligand>
</feature>
<feature type="binding site" evidence="1">
    <location>
        <position position="335"/>
    </location>
    <ligand>
        <name>ATP</name>
        <dbReference type="ChEBI" id="CHEBI:30616"/>
    </ligand>
</feature>
<keyword id="KW-0030">Aminoacyl-tRNA synthetase</keyword>
<keyword id="KW-0067">ATP-binding</keyword>
<keyword id="KW-0963">Cytoplasm</keyword>
<keyword id="KW-0436">Ligase</keyword>
<keyword id="KW-0479">Metal-binding</keyword>
<keyword id="KW-0547">Nucleotide-binding</keyword>
<keyword id="KW-0648">Protein biosynthesis</keyword>
<keyword id="KW-0694">RNA-binding</keyword>
<keyword id="KW-0820">tRNA-binding</keyword>
<keyword id="KW-0862">Zinc</keyword>
<reference key="1">
    <citation type="submission" date="2007-07" db="EMBL/GenBank/DDBJ databases">
        <title>Complete sequence of chromosome of Shewanella baltica OS185.</title>
        <authorList>
            <consortium name="US DOE Joint Genome Institute"/>
            <person name="Copeland A."/>
            <person name="Lucas S."/>
            <person name="Lapidus A."/>
            <person name="Barry K."/>
            <person name="Glavina del Rio T."/>
            <person name="Dalin E."/>
            <person name="Tice H."/>
            <person name="Pitluck S."/>
            <person name="Sims D."/>
            <person name="Brettin T."/>
            <person name="Bruce D."/>
            <person name="Detter J.C."/>
            <person name="Han C."/>
            <person name="Schmutz J."/>
            <person name="Larimer F."/>
            <person name="Land M."/>
            <person name="Hauser L."/>
            <person name="Kyrpides N."/>
            <person name="Mikhailova N."/>
            <person name="Brettar I."/>
            <person name="Rodrigues J."/>
            <person name="Konstantinidis K."/>
            <person name="Tiedje J."/>
            <person name="Richardson P."/>
        </authorList>
    </citation>
    <scope>NUCLEOTIDE SEQUENCE [LARGE SCALE GENOMIC DNA]</scope>
    <source>
        <strain>OS185</strain>
    </source>
</reference>
<dbReference type="EC" id="6.1.1.10" evidence="1"/>
<dbReference type="EMBL" id="CP000753">
    <property type="protein sequence ID" value="ABS08595.1"/>
    <property type="molecule type" value="Genomic_DNA"/>
</dbReference>
<dbReference type="RefSeq" id="WP_012089390.1">
    <property type="nucleotide sequence ID" value="NC_009665.1"/>
</dbReference>
<dbReference type="SMR" id="A6WP56"/>
<dbReference type="KEGG" id="sbm:Shew185_2458"/>
<dbReference type="HOGENOM" id="CLU_009710_7_0_6"/>
<dbReference type="GO" id="GO:0005829">
    <property type="term" value="C:cytosol"/>
    <property type="evidence" value="ECO:0007669"/>
    <property type="project" value="TreeGrafter"/>
</dbReference>
<dbReference type="GO" id="GO:0005524">
    <property type="term" value="F:ATP binding"/>
    <property type="evidence" value="ECO:0007669"/>
    <property type="project" value="UniProtKB-UniRule"/>
</dbReference>
<dbReference type="GO" id="GO:0046872">
    <property type="term" value="F:metal ion binding"/>
    <property type="evidence" value="ECO:0007669"/>
    <property type="project" value="UniProtKB-KW"/>
</dbReference>
<dbReference type="GO" id="GO:0004825">
    <property type="term" value="F:methionine-tRNA ligase activity"/>
    <property type="evidence" value="ECO:0007669"/>
    <property type="project" value="UniProtKB-UniRule"/>
</dbReference>
<dbReference type="GO" id="GO:0000049">
    <property type="term" value="F:tRNA binding"/>
    <property type="evidence" value="ECO:0007669"/>
    <property type="project" value="UniProtKB-KW"/>
</dbReference>
<dbReference type="GO" id="GO:0006431">
    <property type="term" value="P:methionyl-tRNA aminoacylation"/>
    <property type="evidence" value="ECO:0007669"/>
    <property type="project" value="UniProtKB-UniRule"/>
</dbReference>
<dbReference type="CDD" id="cd07957">
    <property type="entry name" value="Anticodon_Ia_Met"/>
    <property type="match status" value="1"/>
</dbReference>
<dbReference type="CDD" id="cd00814">
    <property type="entry name" value="MetRS_core"/>
    <property type="match status" value="1"/>
</dbReference>
<dbReference type="CDD" id="cd02800">
    <property type="entry name" value="tRNA_bind_EcMetRS_like"/>
    <property type="match status" value="1"/>
</dbReference>
<dbReference type="FunFam" id="1.10.730.10:FF:000005">
    <property type="entry name" value="Methionine--tRNA ligase"/>
    <property type="match status" value="1"/>
</dbReference>
<dbReference type="FunFam" id="2.20.28.20:FF:000001">
    <property type="entry name" value="Methionine--tRNA ligase"/>
    <property type="match status" value="1"/>
</dbReference>
<dbReference type="FunFam" id="2.40.50.140:FF:000042">
    <property type="entry name" value="Methionine--tRNA ligase"/>
    <property type="match status" value="1"/>
</dbReference>
<dbReference type="Gene3D" id="3.40.50.620">
    <property type="entry name" value="HUPs"/>
    <property type="match status" value="1"/>
</dbReference>
<dbReference type="Gene3D" id="1.10.730.10">
    <property type="entry name" value="Isoleucyl-tRNA Synthetase, Domain 1"/>
    <property type="match status" value="1"/>
</dbReference>
<dbReference type="Gene3D" id="2.20.28.20">
    <property type="entry name" value="Methionyl-tRNA synthetase, Zn-domain"/>
    <property type="match status" value="1"/>
</dbReference>
<dbReference type="Gene3D" id="2.40.50.140">
    <property type="entry name" value="Nucleic acid-binding proteins"/>
    <property type="match status" value="1"/>
</dbReference>
<dbReference type="HAMAP" id="MF_00098">
    <property type="entry name" value="Met_tRNA_synth_type1"/>
    <property type="match status" value="1"/>
</dbReference>
<dbReference type="InterPro" id="IPR001412">
    <property type="entry name" value="aa-tRNA-synth_I_CS"/>
</dbReference>
<dbReference type="InterPro" id="IPR041872">
    <property type="entry name" value="Anticodon_Met"/>
</dbReference>
<dbReference type="InterPro" id="IPR004495">
    <property type="entry name" value="Met-tRNA-synth_bsu_C"/>
</dbReference>
<dbReference type="InterPro" id="IPR023458">
    <property type="entry name" value="Met-tRNA_ligase_1"/>
</dbReference>
<dbReference type="InterPro" id="IPR014758">
    <property type="entry name" value="Met-tRNA_synth"/>
</dbReference>
<dbReference type="InterPro" id="IPR015413">
    <property type="entry name" value="Methionyl/Leucyl_tRNA_Synth"/>
</dbReference>
<dbReference type="InterPro" id="IPR033911">
    <property type="entry name" value="MetRS_core"/>
</dbReference>
<dbReference type="InterPro" id="IPR029038">
    <property type="entry name" value="MetRS_Zn"/>
</dbReference>
<dbReference type="InterPro" id="IPR012340">
    <property type="entry name" value="NA-bd_OB-fold"/>
</dbReference>
<dbReference type="InterPro" id="IPR014729">
    <property type="entry name" value="Rossmann-like_a/b/a_fold"/>
</dbReference>
<dbReference type="InterPro" id="IPR002547">
    <property type="entry name" value="tRNA-bd_dom"/>
</dbReference>
<dbReference type="InterPro" id="IPR009080">
    <property type="entry name" value="tRNAsynth_Ia_anticodon-bd"/>
</dbReference>
<dbReference type="NCBIfam" id="TIGR00398">
    <property type="entry name" value="metG"/>
    <property type="match status" value="1"/>
</dbReference>
<dbReference type="NCBIfam" id="TIGR00399">
    <property type="entry name" value="metG_C_term"/>
    <property type="match status" value="1"/>
</dbReference>
<dbReference type="NCBIfam" id="NF001100">
    <property type="entry name" value="PRK00133.1"/>
    <property type="match status" value="1"/>
</dbReference>
<dbReference type="PANTHER" id="PTHR45765">
    <property type="entry name" value="METHIONINE--TRNA LIGASE"/>
    <property type="match status" value="1"/>
</dbReference>
<dbReference type="PANTHER" id="PTHR45765:SF1">
    <property type="entry name" value="METHIONINE--TRNA LIGASE, CYTOPLASMIC"/>
    <property type="match status" value="1"/>
</dbReference>
<dbReference type="Pfam" id="PF19303">
    <property type="entry name" value="Anticodon_3"/>
    <property type="match status" value="1"/>
</dbReference>
<dbReference type="Pfam" id="PF09334">
    <property type="entry name" value="tRNA-synt_1g"/>
    <property type="match status" value="1"/>
</dbReference>
<dbReference type="Pfam" id="PF01588">
    <property type="entry name" value="tRNA_bind"/>
    <property type="match status" value="1"/>
</dbReference>
<dbReference type="PRINTS" id="PR01041">
    <property type="entry name" value="TRNASYNTHMET"/>
</dbReference>
<dbReference type="SUPFAM" id="SSF47323">
    <property type="entry name" value="Anticodon-binding domain of a subclass of class I aminoacyl-tRNA synthetases"/>
    <property type="match status" value="1"/>
</dbReference>
<dbReference type="SUPFAM" id="SSF57770">
    <property type="entry name" value="Methionyl-tRNA synthetase (MetRS), Zn-domain"/>
    <property type="match status" value="1"/>
</dbReference>
<dbReference type="SUPFAM" id="SSF50249">
    <property type="entry name" value="Nucleic acid-binding proteins"/>
    <property type="match status" value="1"/>
</dbReference>
<dbReference type="SUPFAM" id="SSF52374">
    <property type="entry name" value="Nucleotidylyl transferase"/>
    <property type="match status" value="1"/>
</dbReference>
<dbReference type="PROSITE" id="PS00178">
    <property type="entry name" value="AA_TRNA_LIGASE_I"/>
    <property type="match status" value="1"/>
</dbReference>
<dbReference type="PROSITE" id="PS50886">
    <property type="entry name" value="TRBD"/>
    <property type="match status" value="1"/>
</dbReference>
<comment type="function">
    <text evidence="1">Is required not only for elongation of protein synthesis but also for the initiation of all mRNA translation through initiator tRNA(fMet) aminoacylation.</text>
</comment>
<comment type="catalytic activity">
    <reaction evidence="1">
        <text>tRNA(Met) + L-methionine + ATP = L-methionyl-tRNA(Met) + AMP + diphosphate</text>
        <dbReference type="Rhea" id="RHEA:13481"/>
        <dbReference type="Rhea" id="RHEA-COMP:9667"/>
        <dbReference type="Rhea" id="RHEA-COMP:9698"/>
        <dbReference type="ChEBI" id="CHEBI:30616"/>
        <dbReference type="ChEBI" id="CHEBI:33019"/>
        <dbReference type="ChEBI" id="CHEBI:57844"/>
        <dbReference type="ChEBI" id="CHEBI:78442"/>
        <dbReference type="ChEBI" id="CHEBI:78530"/>
        <dbReference type="ChEBI" id="CHEBI:456215"/>
        <dbReference type="EC" id="6.1.1.10"/>
    </reaction>
</comment>
<comment type="cofactor">
    <cofactor evidence="1">
        <name>Zn(2+)</name>
        <dbReference type="ChEBI" id="CHEBI:29105"/>
    </cofactor>
    <text evidence="1">Binds 1 zinc ion per subunit.</text>
</comment>
<comment type="subunit">
    <text evidence="1">Homodimer.</text>
</comment>
<comment type="subcellular location">
    <subcellularLocation>
        <location evidence="1">Cytoplasm</location>
    </subcellularLocation>
</comment>
<comment type="similarity">
    <text evidence="1">Belongs to the class-I aminoacyl-tRNA synthetase family. MetG type 1 subfamily.</text>
</comment>
<organism>
    <name type="scientific">Shewanella baltica (strain OS185)</name>
    <dbReference type="NCBI Taxonomy" id="402882"/>
    <lineage>
        <taxon>Bacteria</taxon>
        <taxon>Pseudomonadati</taxon>
        <taxon>Pseudomonadota</taxon>
        <taxon>Gammaproteobacteria</taxon>
        <taxon>Alteromonadales</taxon>
        <taxon>Shewanellaceae</taxon>
        <taxon>Shewanella</taxon>
    </lineage>
</organism>
<accession>A6WP56</accession>
<protein>
    <recommendedName>
        <fullName evidence="1">Methionine--tRNA ligase</fullName>
        <ecNumber evidence="1">6.1.1.10</ecNumber>
    </recommendedName>
    <alternativeName>
        <fullName evidence="1">Methionyl-tRNA synthetase</fullName>
        <shortName evidence="1">MetRS</shortName>
    </alternativeName>
</protein>